<dbReference type="EMBL" id="J02621">
    <property type="protein sequence ID" value="AAA52676.1"/>
    <property type="molecule type" value="mRNA"/>
</dbReference>
<dbReference type="EMBL" id="M21339">
    <property type="protein sequence ID" value="AAA52677.1"/>
    <property type="molecule type" value="Genomic_DNA"/>
</dbReference>
<dbReference type="EMBL" id="BT007337">
    <property type="protein sequence ID" value="AAP36001.1"/>
    <property type="molecule type" value="mRNA"/>
</dbReference>
<dbReference type="EMBL" id="AF064861">
    <property type="status" value="NOT_ANNOTATED_CDS"/>
    <property type="molecule type" value="Genomic_DNA"/>
</dbReference>
<dbReference type="EMBL" id="AL163279">
    <property type="protein sequence ID" value="CAB90453.1"/>
    <property type="molecule type" value="Genomic_DNA"/>
</dbReference>
<dbReference type="EMBL" id="BC000075">
    <property type="protein sequence ID" value="AAH00075.1"/>
    <property type="molecule type" value="mRNA"/>
</dbReference>
<dbReference type="EMBL" id="BC023984">
    <property type="protein sequence ID" value="AAH23984.1"/>
    <property type="molecule type" value="mRNA"/>
</dbReference>
<dbReference type="EMBL" id="BC070153">
    <property type="protein sequence ID" value="AAH70153.1"/>
    <property type="molecule type" value="mRNA"/>
</dbReference>
<dbReference type="EMBL" id="BC106080">
    <property type="protein sequence ID" value="AAI06081.1"/>
    <property type="molecule type" value="mRNA"/>
</dbReference>
<dbReference type="CCDS" id="CCDS33559.1"/>
<dbReference type="PIR" id="A33310">
    <property type="entry name" value="A33310"/>
</dbReference>
<dbReference type="RefSeq" id="NP_004956.5">
    <property type="nucleotide sequence ID" value="NM_004965.6"/>
</dbReference>
<dbReference type="BioGRID" id="109393">
    <property type="interactions" value="184"/>
</dbReference>
<dbReference type="CORUM" id="P05114"/>
<dbReference type="FunCoup" id="P05114">
    <property type="interactions" value="2420"/>
</dbReference>
<dbReference type="IntAct" id="P05114">
    <property type="interactions" value="65"/>
</dbReference>
<dbReference type="MINT" id="P05114"/>
<dbReference type="STRING" id="9606.ENSP00000370125"/>
<dbReference type="GlyGen" id="P05114">
    <property type="glycosylation" value="1 site, 1 O-linked glycan (1 site)"/>
</dbReference>
<dbReference type="iPTMnet" id="P05114"/>
<dbReference type="PhosphoSitePlus" id="P05114"/>
<dbReference type="SwissPalm" id="P05114"/>
<dbReference type="BioMuta" id="HMGN1"/>
<dbReference type="DMDM" id="123101"/>
<dbReference type="CPTAC" id="CPTAC-1350"/>
<dbReference type="jPOST" id="P05114"/>
<dbReference type="MassIVE" id="P05114"/>
<dbReference type="PaxDb" id="9606-ENSP00000370125"/>
<dbReference type="PeptideAtlas" id="P05114"/>
<dbReference type="ProteomicsDB" id="51800"/>
<dbReference type="Pumba" id="P05114"/>
<dbReference type="TopDownProteomics" id="P05114"/>
<dbReference type="Antibodypedia" id="23386">
    <property type="antibodies" value="394 antibodies from 36 providers"/>
</dbReference>
<dbReference type="DNASU" id="3150"/>
<dbReference type="Ensembl" id="ENST00000380749.10">
    <property type="protein sequence ID" value="ENSP00000370125.5"/>
    <property type="gene ID" value="ENSG00000205581.11"/>
</dbReference>
<dbReference type="GeneID" id="3150"/>
<dbReference type="KEGG" id="hsa:3150"/>
<dbReference type="MANE-Select" id="ENST00000380749.10">
    <property type="protein sequence ID" value="ENSP00000370125.5"/>
    <property type="RefSeq nucleotide sequence ID" value="NM_004965.7"/>
    <property type="RefSeq protein sequence ID" value="NP_004956.5"/>
</dbReference>
<dbReference type="UCSC" id="uc002yxo.4">
    <property type="organism name" value="human"/>
</dbReference>
<dbReference type="AGR" id="HGNC:4984"/>
<dbReference type="CTD" id="3150"/>
<dbReference type="DisGeNET" id="3150"/>
<dbReference type="GeneCards" id="HMGN1"/>
<dbReference type="HGNC" id="HGNC:4984">
    <property type="gene designation" value="HMGN1"/>
</dbReference>
<dbReference type="HPA" id="ENSG00000205581">
    <property type="expression patterns" value="Low tissue specificity"/>
</dbReference>
<dbReference type="MIM" id="163920">
    <property type="type" value="gene"/>
</dbReference>
<dbReference type="neXtProt" id="NX_P05114"/>
<dbReference type="OpenTargets" id="ENSG00000205581"/>
<dbReference type="PharmGKB" id="PA35088"/>
<dbReference type="VEuPathDB" id="HostDB:ENSG00000205581"/>
<dbReference type="eggNOG" id="ENOG502S7UM">
    <property type="taxonomic scope" value="Eukaryota"/>
</dbReference>
<dbReference type="GeneTree" id="ENSGT00950000182802"/>
<dbReference type="HOGENOM" id="CLU_141985_1_0_1"/>
<dbReference type="InParanoid" id="P05114"/>
<dbReference type="OMA" id="CHWPEGA"/>
<dbReference type="OrthoDB" id="9538615at2759"/>
<dbReference type="PAN-GO" id="P05114">
    <property type="GO annotations" value="3 GO annotations based on evolutionary models"/>
</dbReference>
<dbReference type="PhylomeDB" id="P05114"/>
<dbReference type="TreeFam" id="TF105374"/>
<dbReference type="PathwayCommons" id="P05114"/>
<dbReference type="SignaLink" id="P05114"/>
<dbReference type="SIGNOR" id="P05114"/>
<dbReference type="BioGRID-ORCS" id="3150">
    <property type="hits" value="32 hits in 1122 CRISPR screens"/>
</dbReference>
<dbReference type="CD-CODE" id="91857CE7">
    <property type="entry name" value="Nucleolus"/>
</dbReference>
<dbReference type="CD-CODE" id="DEE660B4">
    <property type="entry name" value="Stress granule"/>
</dbReference>
<dbReference type="ChiTaRS" id="HMGN1">
    <property type="organism name" value="human"/>
</dbReference>
<dbReference type="GeneWiki" id="HMGN1"/>
<dbReference type="GenomeRNAi" id="3150"/>
<dbReference type="Pharos" id="P05114">
    <property type="development level" value="Tbio"/>
</dbReference>
<dbReference type="PRO" id="PR:P05114"/>
<dbReference type="Proteomes" id="UP000005640">
    <property type="component" value="Chromosome 21"/>
</dbReference>
<dbReference type="RNAct" id="P05114">
    <property type="molecule type" value="protein"/>
</dbReference>
<dbReference type="Bgee" id="ENSG00000205581">
    <property type="expression patterns" value="Expressed in ventricular zone and 107 other cell types or tissues"/>
</dbReference>
<dbReference type="ExpressionAtlas" id="P05114">
    <property type="expression patterns" value="baseline and differential"/>
</dbReference>
<dbReference type="GO" id="GO:0000785">
    <property type="term" value="C:chromatin"/>
    <property type="evidence" value="ECO:0000304"/>
    <property type="project" value="ProtInc"/>
</dbReference>
<dbReference type="GO" id="GO:0005737">
    <property type="term" value="C:cytoplasm"/>
    <property type="evidence" value="ECO:0007669"/>
    <property type="project" value="UniProtKB-SubCell"/>
</dbReference>
<dbReference type="GO" id="GO:0001674">
    <property type="term" value="C:female germ cell nucleus"/>
    <property type="evidence" value="ECO:0007669"/>
    <property type="project" value="Ensembl"/>
</dbReference>
<dbReference type="GO" id="GO:0005654">
    <property type="term" value="C:nucleoplasm"/>
    <property type="evidence" value="ECO:0000314"/>
    <property type="project" value="HPA"/>
</dbReference>
<dbReference type="GO" id="GO:0005634">
    <property type="term" value="C:nucleus"/>
    <property type="evidence" value="ECO:0007005"/>
    <property type="project" value="UniProtKB"/>
</dbReference>
<dbReference type="GO" id="GO:0003682">
    <property type="term" value="F:chromatin binding"/>
    <property type="evidence" value="ECO:0000318"/>
    <property type="project" value="GO_Central"/>
</dbReference>
<dbReference type="GO" id="GO:0003677">
    <property type="term" value="F:DNA binding"/>
    <property type="evidence" value="ECO:0000304"/>
    <property type="project" value="ProtInc"/>
</dbReference>
<dbReference type="GO" id="GO:0031492">
    <property type="term" value="F:nucleosomal DNA binding"/>
    <property type="evidence" value="ECO:0007669"/>
    <property type="project" value="InterPro"/>
</dbReference>
<dbReference type="GO" id="GO:0006325">
    <property type="term" value="P:chromatin organization"/>
    <property type="evidence" value="ECO:0000318"/>
    <property type="project" value="GO_Central"/>
</dbReference>
<dbReference type="GO" id="GO:0032786">
    <property type="term" value="P:positive regulation of DNA-templated transcription, elongation"/>
    <property type="evidence" value="ECO:0000304"/>
    <property type="project" value="ProtInc"/>
</dbReference>
<dbReference type="GO" id="GO:0048597">
    <property type="term" value="P:post-embryonic camera-type eye morphogenesis"/>
    <property type="evidence" value="ECO:0007669"/>
    <property type="project" value="Ensembl"/>
</dbReference>
<dbReference type="GO" id="GO:0000720">
    <property type="term" value="P:pyrimidine dimer repair by nucleotide-excision repair"/>
    <property type="evidence" value="ECO:0007669"/>
    <property type="project" value="Ensembl"/>
</dbReference>
<dbReference type="GO" id="GO:0040034">
    <property type="term" value="P:regulation of development, heterochronic"/>
    <property type="evidence" value="ECO:0007669"/>
    <property type="project" value="Ensembl"/>
</dbReference>
<dbReference type="GO" id="GO:0050678">
    <property type="term" value="P:regulation of epithelial cell proliferation"/>
    <property type="evidence" value="ECO:0007669"/>
    <property type="project" value="Ensembl"/>
</dbReference>
<dbReference type="GO" id="GO:0006357">
    <property type="term" value="P:regulation of transcription by RNA polymerase II"/>
    <property type="evidence" value="ECO:0007669"/>
    <property type="project" value="Ensembl"/>
</dbReference>
<dbReference type="GO" id="GO:0010224">
    <property type="term" value="P:response to UV-B"/>
    <property type="evidence" value="ECO:0007669"/>
    <property type="project" value="Ensembl"/>
</dbReference>
<dbReference type="GO" id="GO:0010225">
    <property type="term" value="P:response to UV-C"/>
    <property type="evidence" value="ECO:0007669"/>
    <property type="project" value="Ensembl"/>
</dbReference>
<dbReference type="GO" id="GO:0006283">
    <property type="term" value="P:transcription-coupled nucleotide-excision repair"/>
    <property type="evidence" value="ECO:0007669"/>
    <property type="project" value="Ensembl"/>
</dbReference>
<dbReference type="InterPro" id="IPR000079">
    <property type="entry name" value="HMGN_fam"/>
</dbReference>
<dbReference type="PANTHER" id="PTHR23087:SF12">
    <property type="entry name" value="NON-HISTONE CHROMOSOMAL PROTEIN HMG-14"/>
    <property type="match status" value="1"/>
</dbReference>
<dbReference type="PANTHER" id="PTHR23087">
    <property type="entry name" value="NONHISTONE CHROMOSOMAL PROTEIN HMG"/>
    <property type="match status" value="1"/>
</dbReference>
<dbReference type="Pfam" id="PF01101">
    <property type="entry name" value="HMG14_17"/>
    <property type="match status" value="1"/>
</dbReference>
<dbReference type="PRINTS" id="PR00925">
    <property type="entry name" value="NONHISHMG17"/>
</dbReference>
<dbReference type="SMART" id="SM00527">
    <property type="entry name" value="HMG17"/>
    <property type="match status" value="1"/>
</dbReference>
<dbReference type="PROSITE" id="PS00355">
    <property type="entry name" value="HMG14_17"/>
    <property type="match status" value="1"/>
</dbReference>
<reference key="1">
    <citation type="journal article" date="1986" name="J. Biol. Chem.">
        <title>Chromosomal protein HMG-14. Complete human cDNA sequence and evidence for a multigene family.</title>
        <authorList>
            <person name="Landsman D."/>
            <person name="Srikantha T."/>
            <person name="Westermann R."/>
            <person name="Bustin M."/>
        </authorList>
    </citation>
    <scope>NUCLEOTIDE SEQUENCE [MRNA]</scope>
</reference>
<reference key="2">
    <citation type="journal article" date="1989" name="J. Biol. Chem.">
        <title>Chromosomal protein HMG-14. Identification, characterization, and chromosome localization of a functional gene from the large human multigene family.</title>
        <authorList>
            <person name="Landsman D."/>
            <person name="McBride O.W."/>
            <person name="Soares N."/>
            <person name="Crippa M.P."/>
            <person name="Srikantha T."/>
            <person name="Bustin M."/>
        </authorList>
    </citation>
    <scope>NUCLEOTIDE SEQUENCE [GENOMIC DNA]</scope>
</reference>
<reference key="3">
    <citation type="submission" date="2003-05" db="EMBL/GenBank/DDBJ databases">
        <title>Cloning of human full-length CDSs in BD Creator(TM) system donor vector.</title>
        <authorList>
            <person name="Kalnine N."/>
            <person name="Chen X."/>
            <person name="Rolfs A."/>
            <person name="Halleck A."/>
            <person name="Hines L."/>
            <person name="Eisenstein S."/>
            <person name="Koundinya M."/>
            <person name="Raphael J."/>
            <person name="Moreira D."/>
            <person name="Kelley T."/>
            <person name="LaBaer J."/>
            <person name="Lin Y."/>
            <person name="Phelan M."/>
            <person name="Farmer A."/>
        </authorList>
    </citation>
    <scope>NUCLEOTIDE SEQUENCE [LARGE SCALE MRNA]</scope>
</reference>
<reference key="4">
    <citation type="journal article" date="2000" name="Nature">
        <title>The DNA sequence of human chromosome 21.</title>
        <authorList>
            <person name="Hattori M."/>
            <person name="Fujiyama A."/>
            <person name="Taylor T.D."/>
            <person name="Watanabe H."/>
            <person name="Yada T."/>
            <person name="Park H.-S."/>
            <person name="Toyoda A."/>
            <person name="Ishii K."/>
            <person name="Totoki Y."/>
            <person name="Choi D.-K."/>
            <person name="Groner Y."/>
            <person name="Soeda E."/>
            <person name="Ohki M."/>
            <person name="Takagi T."/>
            <person name="Sakaki Y."/>
            <person name="Taudien S."/>
            <person name="Blechschmidt K."/>
            <person name="Polley A."/>
            <person name="Menzel U."/>
            <person name="Delabar J."/>
            <person name="Kumpf K."/>
            <person name="Lehmann R."/>
            <person name="Patterson D."/>
            <person name="Reichwald K."/>
            <person name="Rump A."/>
            <person name="Schillhabel M."/>
            <person name="Schudy A."/>
            <person name="Zimmermann W."/>
            <person name="Rosenthal A."/>
            <person name="Kudoh J."/>
            <person name="Shibuya K."/>
            <person name="Kawasaki K."/>
            <person name="Asakawa S."/>
            <person name="Shintani A."/>
            <person name="Sasaki T."/>
            <person name="Nagamine K."/>
            <person name="Mitsuyama S."/>
            <person name="Antonarakis S.E."/>
            <person name="Minoshima S."/>
            <person name="Shimizu N."/>
            <person name="Nordsiek G."/>
            <person name="Hornischer K."/>
            <person name="Brandt P."/>
            <person name="Scharfe M."/>
            <person name="Schoen O."/>
            <person name="Desario A."/>
            <person name="Reichelt J."/>
            <person name="Kauer G."/>
            <person name="Bloecker H."/>
            <person name="Ramser J."/>
            <person name="Beck A."/>
            <person name="Klages S."/>
            <person name="Hennig S."/>
            <person name="Riesselmann L."/>
            <person name="Dagand E."/>
            <person name="Wehrmeyer S."/>
            <person name="Borzym K."/>
            <person name="Gardiner K."/>
            <person name="Nizetic D."/>
            <person name="Francis F."/>
            <person name="Lehrach H."/>
            <person name="Reinhardt R."/>
            <person name="Yaspo M.-L."/>
        </authorList>
    </citation>
    <scope>NUCLEOTIDE SEQUENCE [LARGE SCALE GENOMIC DNA]</scope>
</reference>
<reference key="5">
    <citation type="journal article" date="2004" name="Genome Res.">
        <title>The status, quality, and expansion of the NIH full-length cDNA project: the Mammalian Gene Collection (MGC).</title>
        <authorList>
            <consortium name="The MGC Project Team"/>
        </authorList>
    </citation>
    <scope>NUCLEOTIDE SEQUENCE [LARGE SCALE MRNA]</scope>
    <source>
        <tissue>Bone marrow</tissue>
        <tissue>Brain</tissue>
        <tissue>Ovary</tissue>
    </source>
</reference>
<reference key="6">
    <citation type="journal article" date="2000" name="Protein Sci.">
        <title>Phosphorylation and subcellular redistribution of high mobility group proteins 14 and 17, analyzed by mass spectrometry.</title>
        <authorList>
            <person name="Louie D.F."/>
            <person name="Gloor K.K."/>
            <person name="Galasinski S.C."/>
            <person name="Resing K.A."/>
            <person name="Ahn N.G."/>
        </authorList>
    </citation>
    <scope>PROTEIN SEQUENCE OF 19-31</scope>
    <scope>PHOSPHORYLATION AT SER-21 AND SER-25</scope>
    <scope>SUBCELLULAR LOCATION</scope>
    <scope>MASS SPECTROMETRY</scope>
</reference>
<reference key="7">
    <citation type="journal article" date="2008" name="Curr. Biol.">
        <title>Evidence for insertional RNA editing in humans.</title>
        <authorList>
            <person name="Zougman A."/>
            <person name="Ziolkowski P."/>
            <person name="Mann M."/>
            <person name="Wisniewski J.R."/>
        </authorList>
    </citation>
    <scope>PARTIAL PROTEIN SEQUENCE (RNA EDITED VERSION)</scope>
    <scope>RNA EDITING</scope>
    <scope>SUBCELLULAR LOCATION</scope>
    <scope>IDENTIFICATION BY MASS SPECTROMETRY</scope>
</reference>
<reference key="8">
    <citation type="journal article" date="2007" name="J. Proteome Res.">
        <title>Improved titanium dioxide enrichment of phosphopeptides from HeLa cells and high confident phosphopeptide identification by cross-validation of MS/MS and MS/MS/MS spectra.</title>
        <authorList>
            <person name="Yu L.R."/>
            <person name="Zhu Z."/>
            <person name="Chan K.C."/>
            <person name="Issaq H.J."/>
            <person name="Dimitrov D.S."/>
            <person name="Veenstra T.D."/>
        </authorList>
    </citation>
    <scope>IDENTIFICATION BY MASS SPECTROMETRY [LARGE SCALE ANALYSIS]</scope>
    <source>
        <tissue>Cervix carcinoma</tissue>
    </source>
</reference>
<reference key="9">
    <citation type="journal article" date="2008" name="J. Proteome Res.">
        <title>Phosphorylation analysis of primary human T lymphocytes using sequential IMAC and titanium oxide enrichment.</title>
        <authorList>
            <person name="Carrascal M."/>
            <person name="Ovelleiro D."/>
            <person name="Casas V."/>
            <person name="Gay M."/>
            <person name="Abian J."/>
        </authorList>
    </citation>
    <scope>IDENTIFICATION BY MASS SPECTROMETRY [LARGE SCALE ANALYSIS]</scope>
    <source>
        <tissue>T-cell</tissue>
    </source>
</reference>
<reference key="10">
    <citation type="journal article" date="2008" name="Proc. Natl. Acad. Sci. U.S.A.">
        <title>A quantitative atlas of mitotic phosphorylation.</title>
        <authorList>
            <person name="Dephoure N."/>
            <person name="Zhou C."/>
            <person name="Villen J."/>
            <person name="Beausoleil S.A."/>
            <person name="Bakalarski C.E."/>
            <person name="Elledge S.J."/>
            <person name="Gygi S.P."/>
        </authorList>
    </citation>
    <scope>PHOSPHORYLATION [LARGE SCALE ANALYSIS] AT SER-86; SER-89 AND SER-99</scope>
    <scope>IDENTIFICATION BY MASS SPECTROMETRY [LARGE SCALE ANALYSIS]</scope>
    <source>
        <tissue>Cervix carcinoma</tissue>
    </source>
</reference>
<reference key="11">
    <citation type="journal article" date="2008" name="Proteomics">
        <title>Large-scale phosphoproteome analysis of human liver tissue by enrichment and fractionation of phosphopeptides with strong anion exchange chromatography.</title>
        <authorList>
            <person name="Han G."/>
            <person name="Ye M."/>
            <person name="Zhou H."/>
            <person name="Jiang X."/>
            <person name="Feng S."/>
            <person name="Jiang X."/>
            <person name="Tian R."/>
            <person name="Wan D."/>
            <person name="Zou H."/>
            <person name="Gu J."/>
        </authorList>
    </citation>
    <scope>PHOSPHORYLATION [LARGE SCALE ANALYSIS] AT SER-86 AND SER-89</scope>
    <scope>IDENTIFICATION BY MASS SPECTROMETRY [LARGE SCALE ANALYSIS]</scope>
    <source>
        <tissue>Liver</tissue>
    </source>
</reference>
<reference key="12">
    <citation type="journal article" date="2009" name="Anal. Chem.">
        <title>Lys-N and trypsin cover complementary parts of the phosphoproteome in a refined SCX-based approach.</title>
        <authorList>
            <person name="Gauci S."/>
            <person name="Helbig A.O."/>
            <person name="Slijper M."/>
            <person name="Krijgsveld J."/>
            <person name="Heck A.J."/>
            <person name="Mohammed S."/>
        </authorList>
    </citation>
    <scope>IDENTIFICATION BY MASS SPECTROMETRY [LARGE SCALE ANALYSIS]</scope>
</reference>
<reference key="13">
    <citation type="journal article" date="2009" name="Sci. Signal.">
        <title>Quantitative phosphoproteomic analysis of T cell receptor signaling reveals system-wide modulation of protein-protein interactions.</title>
        <authorList>
            <person name="Mayya V."/>
            <person name="Lundgren D.H."/>
            <person name="Hwang S.-I."/>
            <person name="Rezaul K."/>
            <person name="Wu L."/>
            <person name="Eng J.K."/>
            <person name="Rodionov V."/>
            <person name="Han D.K."/>
        </authorList>
    </citation>
    <scope>PHOSPHORYLATION [LARGE SCALE ANALYSIS] AT SER-86 AND SER-89</scope>
    <scope>IDENTIFICATION BY MASS SPECTROMETRY [LARGE SCALE ANALYSIS]</scope>
    <source>
        <tissue>Leukemic T-cell</tissue>
    </source>
</reference>
<reference key="14">
    <citation type="journal article" date="2009" name="Science">
        <title>Lysine acetylation targets protein complexes and co-regulates major cellular functions.</title>
        <authorList>
            <person name="Choudhary C."/>
            <person name="Kumar C."/>
            <person name="Gnad F."/>
            <person name="Nielsen M.L."/>
            <person name="Rehman M."/>
            <person name="Walther T.C."/>
            <person name="Olsen J.V."/>
            <person name="Mann M."/>
        </authorList>
    </citation>
    <scope>ACETYLATION [LARGE SCALE ANALYSIS] AT LYS-14 AND LYS-82</scope>
    <scope>IDENTIFICATION BY MASS SPECTROMETRY [LARGE SCALE ANALYSIS]</scope>
</reference>
<reference key="15">
    <citation type="journal article" date="2010" name="Sci. Signal.">
        <title>Quantitative phosphoproteomics reveals widespread full phosphorylation site occupancy during mitosis.</title>
        <authorList>
            <person name="Olsen J.V."/>
            <person name="Vermeulen M."/>
            <person name="Santamaria A."/>
            <person name="Kumar C."/>
            <person name="Miller M.L."/>
            <person name="Jensen L.J."/>
            <person name="Gnad F."/>
            <person name="Cox J."/>
            <person name="Jensen T.S."/>
            <person name="Nigg E.A."/>
            <person name="Brunak S."/>
            <person name="Mann M."/>
        </authorList>
    </citation>
    <scope>PHOSPHORYLATION [LARGE SCALE ANALYSIS] AT SER-86 AND SER-89</scope>
    <scope>IDENTIFICATION BY MASS SPECTROMETRY [LARGE SCALE ANALYSIS]</scope>
    <source>
        <tissue>Cervix carcinoma</tissue>
    </source>
</reference>
<reference key="16">
    <citation type="journal article" date="2011" name="BMC Syst. Biol.">
        <title>Initial characterization of the human central proteome.</title>
        <authorList>
            <person name="Burkard T.R."/>
            <person name="Planyavsky M."/>
            <person name="Kaupe I."/>
            <person name="Breitwieser F.P."/>
            <person name="Buerckstuemmer T."/>
            <person name="Bennett K.L."/>
            <person name="Superti-Furga G."/>
            <person name="Colinge J."/>
        </authorList>
    </citation>
    <scope>IDENTIFICATION BY MASS SPECTROMETRY [LARGE SCALE ANALYSIS]</scope>
</reference>
<reference key="17">
    <citation type="journal article" date="2011" name="Sci. Signal.">
        <title>System-wide temporal characterization of the proteome and phosphoproteome of human embryonic stem cell differentiation.</title>
        <authorList>
            <person name="Rigbolt K.T."/>
            <person name="Prokhorova T.A."/>
            <person name="Akimov V."/>
            <person name="Henningsen J."/>
            <person name="Johansen P.T."/>
            <person name="Kratchmarova I."/>
            <person name="Kassem M."/>
            <person name="Mann M."/>
            <person name="Olsen J.V."/>
            <person name="Blagoev B."/>
        </authorList>
    </citation>
    <scope>PHOSPHORYLATION [LARGE SCALE ANALYSIS] AT SER-8; SER-86 AND SER-89</scope>
    <scope>IDENTIFICATION BY MASS SPECTROMETRY [LARGE SCALE ANALYSIS]</scope>
</reference>
<reference key="18">
    <citation type="journal article" date="2013" name="J. Proteome Res.">
        <title>Toward a comprehensive characterization of a human cancer cell phosphoproteome.</title>
        <authorList>
            <person name="Zhou H."/>
            <person name="Di Palma S."/>
            <person name="Preisinger C."/>
            <person name="Peng M."/>
            <person name="Polat A.N."/>
            <person name="Heck A.J."/>
            <person name="Mohammed S."/>
        </authorList>
    </citation>
    <scope>PHOSPHORYLATION [LARGE SCALE ANALYSIS] AT SER-21; SER-25; SER-86 AND SER-89</scope>
    <scope>IDENTIFICATION BY MASS SPECTROMETRY [LARGE SCALE ANALYSIS]</scope>
    <source>
        <tissue>Cervix carcinoma</tissue>
        <tissue>Erythroleukemia</tissue>
    </source>
</reference>
<reference key="19">
    <citation type="journal article" date="2014" name="J. Proteomics">
        <title>An enzyme assisted RP-RPLC approach for in-depth analysis of human liver phosphoproteome.</title>
        <authorList>
            <person name="Bian Y."/>
            <person name="Song C."/>
            <person name="Cheng K."/>
            <person name="Dong M."/>
            <person name="Wang F."/>
            <person name="Huang J."/>
            <person name="Sun D."/>
            <person name="Wang L."/>
            <person name="Ye M."/>
            <person name="Zou H."/>
        </authorList>
    </citation>
    <scope>PHOSPHORYLATION [LARGE SCALE ANALYSIS] AT SER-86 AND SER-89</scope>
    <scope>IDENTIFICATION BY MASS SPECTROMETRY [LARGE SCALE ANALYSIS]</scope>
    <source>
        <tissue>Liver</tissue>
    </source>
</reference>
<reference key="20">
    <citation type="journal article" date="2017" name="Mol. Cell">
        <title>Serine ADP-ribosylation depends on HPF1.</title>
        <authorList>
            <person name="Bonfiglio J.J."/>
            <person name="Fontana P."/>
            <person name="Zhang Q."/>
            <person name="Colby T."/>
            <person name="Gibbs-Seymour I."/>
            <person name="Atanassov I."/>
            <person name="Bartlett E."/>
            <person name="Zaja R."/>
            <person name="Ahel I."/>
            <person name="Matic I."/>
        </authorList>
    </citation>
    <scope>ADP-RIBOSYLATION AT SER-7 AND SER-25</scope>
</reference>
<reference key="21">
    <citation type="journal article" date="2021" name="Proc. Natl. Acad. Sci. U.S.A.">
        <title>A short ORF-encoded transcriptional regulator.</title>
        <authorList>
            <person name="Koh M."/>
            <person name="Ahmad I."/>
            <person name="Ko Y."/>
            <person name="Zhang Y."/>
            <person name="Martinez T.F."/>
            <person name="Diedrich J.K."/>
            <person name="Chu Q."/>
            <person name="Moresco J.J."/>
            <person name="Erb M.A."/>
            <person name="Saghatelian A."/>
            <person name="Schultz P.G."/>
            <person name="Bollong M.J."/>
        </authorList>
    </citation>
    <scope>INTERACTION WITH SEHBP</scope>
</reference>
<keyword id="KW-0007">Acetylation</keyword>
<keyword id="KW-0013">ADP-ribosylation</keyword>
<keyword id="KW-0963">Cytoplasm</keyword>
<keyword id="KW-0903">Direct protein sequencing</keyword>
<keyword id="KW-0238">DNA-binding</keyword>
<keyword id="KW-0539">Nucleus</keyword>
<keyword id="KW-0597">Phosphoprotein</keyword>
<keyword id="KW-1267">Proteomics identification</keyword>
<keyword id="KW-1185">Reference proteome</keyword>
<keyword id="KW-0691">RNA editing</keyword>
<protein>
    <recommendedName>
        <fullName>Non-histone chromosomal protein HMG-14</fullName>
    </recommendedName>
    <alternativeName>
        <fullName>High mobility group nucleosome-binding domain-containing protein 1</fullName>
    </alternativeName>
</protein>
<proteinExistence type="evidence at protein level"/>
<evidence type="ECO:0000250" key="1"/>
<evidence type="ECO:0000250" key="2">
    <source>
        <dbReference type="UniProtKB" id="P18608"/>
    </source>
</evidence>
<evidence type="ECO:0000256" key="3">
    <source>
        <dbReference type="SAM" id="MobiDB-lite"/>
    </source>
</evidence>
<evidence type="ECO:0000269" key="4">
    <source>
    </source>
</evidence>
<evidence type="ECO:0000269" key="5">
    <source>
    </source>
</evidence>
<evidence type="ECO:0000269" key="6">
    <source>
    </source>
</evidence>
<evidence type="ECO:0000269" key="7">
    <source>
    </source>
</evidence>
<evidence type="ECO:0000305" key="8"/>
<evidence type="ECO:0007744" key="9">
    <source>
    </source>
</evidence>
<evidence type="ECO:0007744" key="10">
    <source>
    </source>
</evidence>
<evidence type="ECO:0007744" key="11">
    <source>
    </source>
</evidence>
<evidence type="ECO:0007744" key="12">
    <source>
    </source>
</evidence>
<evidence type="ECO:0007744" key="13">
    <source>
    </source>
</evidence>
<evidence type="ECO:0007744" key="14">
    <source>
    </source>
</evidence>
<evidence type="ECO:0007744" key="15">
    <source>
    </source>
</evidence>
<evidence type="ECO:0007744" key="16">
    <source>
    </source>
</evidence>
<feature type="chain" id="PRO_0000206691" description="Non-histone chromosomal protein HMG-14">
    <location>
        <begin position="1"/>
        <end position="100"/>
    </location>
</feature>
<feature type="region of interest" description="Disordered" evidence="3">
    <location>
        <begin position="1"/>
        <end position="100"/>
    </location>
</feature>
<feature type="compositionally biased region" description="Basic and acidic residues" evidence="3">
    <location>
        <begin position="30"/>
        <end position="50"/>
    </location>
</feature>
<feature type="compositionally biased region" description="Basic and acidic residues" evidence="3">
    <location>
        <begin position="69"/>
        <end position="85"/>
    </location>
</feature>
<feature type="modified residue" description="ADP-ribosylserine" evidence="6">
    <location>
        <position position="7"/>
    </location>
</feature>
<feature type="modified residue" description="Phosphoserine" evidence="14">
    <location>
        <position position="8"/>
    </location>
</feature>
<feature type="modified residue" description="N6-acetyllysine" evidence="11">
    <location>
        <position position="14"/>
    </location>
</feature>
<feature type="modified residue" description="Phosphoserine; by RPS6KA5" evidence="4 15">
    <location>
        <position position="21"/>
    </location>
</feature>
<feature type="modified residue" description="ADP-ribosylserine; alternate" evidence="6">
    <location>
        <position position="25"/>
    </location>
</feature>
<feature type="modified residue" description="Phosphoserine; alternate; by RPS6KA5" evidence="4 15">
    <location>
        <position position="25"/>
    </location>
</feature>
<feature type="modified residue" description="N6-acetyllysine" evidence="2">
    <location>
        <position position="27"/>
    </location>
</feature>
<feature type="modified residue" description="Phosphothreonine" evidence="2">
    <location>
        <position position="81"/>
    </location>
</feature>
<feature type="modified residue" description="N6-acetyllysine" evidence="11">
    <location>
        <position position="82"/>
    </location>
</feature>
<feature type="modified residue" description="Phosphoserine" evidence="9 10 12 13 14 15 16">
    <location>
        <position position="86"/>
    </location>
</feature>
<feature type="modified residue" description="Phosphoserine" evidence="9 10 12 13 14 15 16">
    <location>
        <position position="89"/>
    </location>
</feature>
<feature type="modified residue" description="Phosphoserine" evidence="10">
    <location>
        <position position="99"/>
    </location>
</feature>
<feature type="sequence variant" id="VAR_054790" description="In RNA edited version.">
    <original>M</original>
    <variation>MLGRREEWQRQGSPVSRRLSARRGPQAPGTRLPRRHPARAFPAATM</variation>
    <location>
        <position position="1"/>
    </location>
</feature>
<sequence>MPKRKVSSAEGAAKEEPKRRSARLSAKPPAKVEAKPKKAAAKDKSSDKKVQTKGKRGAKGKQAEVANQETKEDLPAENGETKTEESPASDEAGEKEAKSD</sequence>
<organism>
    <name type="scientific">Homo sapiens</name>
    <name type="common">Human</name>
    <dbReference type="NCBI Taxonomy" id="9606"/>
    <lineage>
        <taxon>Eukaryota</taxon>
        <taxon>Metazoa</taxon>
        <taxon>Chordata</taxon>
        <taxon>Craniata</taxon>
        <taxon>Vertebrata</taxon>
        <taxon>Euteleostomi</taxon>
        <taxon>Mammalia</taxon>
        <taxon>Eutheria</taxon>
        <taxon>Euarchontoglires</taxon>
        <taxon>Primates</taxon>
        <taxon>Haplorrhini</taxon>
        <taxon>Catarrhini</taxon>
        <taxon>Hominidae</taxon>
        <taxon>Homo</taxon>
    </lineage>
</organism>
<gene>
    <name type="primary">HMGN1</name>
    <name type="synonym">HMG14</name>
</gene>
<comment type="function">
    <text evidence="1">Binds to the inner side of the nucleosomal DNA thus altering the interaction between the DNA and the histone octamer. May be involved in the process which maintains transcribable genes in a unique chromatin conformation. Inhibits the phosphorylation of nucleosomal histones H3 and H2A by RPS6KA5/MSK1 and RPS6KA3/RSK2 (By similarity).</text>
</comment>
<comment type="subunit">
    <text evidence="7">Interacts with transcriptional regulator SEHBP.</text>
</comment>
<comment type="subcellular location">
    <subcellularLocation>
        <location>Nucleus</location>
    </subcellularLocation>
    <subcellularLocation>
        <location>Cytoplasm</location>
    </subcellularLocation>
    <text>Cytoplasmic enrichment upon phosphorylation. The RNA edited version localizes to the nucleus.</text>
</comment>
<comment type="PTM">
    <text evidence="1 4">Phosphorylation on Ser-21 and Ser-25 weakens binding to nucleosomes and increases the rate of H3 phosphorylation (By similarity). Phosphorylation favors cytoplasmic localization.</text>
</comment>
<comment type="RNA editing" locationType="Not_applicable">
    <text evidence="5">Partially edited. A new initiator methionine may be created by a single uridine insertion in the 5'-UTR, causing an N-terminal extension of 45 amino acids. The existence of the RNA edited version is supported by direct protein sequencing by MS/MS of the following peptides specific to that version: 23-31 and 40-48. The RNA edited version is called ET-HMGN1.</text>
</comment>
<comment type="mass spectrometry"/>
<comment type="mass spectrometry"/>
<comment type="mass spectrometry"/>
<comment type="mass spectrometry"/>
<comment type="similarity">
    <text evidence="8">Belongs to the HMGN family.</text>
</comment>
<name>HMGN1_HUMAN</name>
<accession>P05114</accession>
<accession>Q3KQR8</accession>